<comment type="function">
    <text evidence="1">Produces ATP from ADP in the presence of a proton gradient across the membrane.</text>
</comment>
<comment type="subunit">
    <text evidence="1">F-type ATPases have 2 components, CF(1) - the catalytic core - and CF(0) - the membrane proton channel. CF(1) has five subunits: alpha(3), beta(3), gamma(1), delta(1), epsilon(1). CF(0) has three main subunits: a, b and c.</text>
</comment>
<comment type="subcellular location">
    <subcellularLocation>
        <location evidence="1">Cell membrane</location>
        <topology evidence="1">Peripheral membrane protein</topology>
    </subcellularLocation>
</comment>
<comment type="similarity">
    <text evidence="1">Belongs to the ATPase epsilon chain family.</text>
</comment>
<evidence type="ECO:0000255" key="1">
    <source>
        <dbReference type="HAMAP-Rule" id="MF_00530"/>
    </source>
</evidence>
<evidence type="ECO:0000256" key="2">
    <source>
        <dbReference type="SAM" id="MobiDB-lite"/>
    </source>
</evidence>
<feature type="chain" id="PRO_1000127841" description="ATP synthase epsilon chain">
    <location>
        <begin position="1"/>
        <end position="124"/>
    </location>
</feature>
<feature type="region of interest" description="Disordered" evidence="2">
    <location>
        <begin position="97"/>
        <end position="124"/>
    </location>
</feature>
<keyword id="KW-0066">ATP synthesis</keyword>
<keyword id="KW-1003">Cell membrane</keyword>
<keyword id="KW-0139">CF(1)</keyword>
<keyword id="KW-0375">Hydrogen ion transport</keyword>
<keyword id="KW-0406">Ion transport</keyword>
<keyword id="KW-0472">Membrane</keyword>
<keyword id="KW-1185">Reference proteome</keyword>
<keyword id="KW-0813">Transport</keyword>
<name>ATPE_CORU7</name>
<proteinExistence type="inferred from homology"/>
<dbReference type="EMBL" id="AM942444">
    <property type="protein sequence ID" value="CAQ04677.1"/>
    <property type="molecule type" value="Genomic_DNA"/>
</dbReference>
<dbReference type="RefSeq" id="WP_012359968.1">
    <property type="nucleotide sequence ID" value="NC_010545.1"/>
</dbReference>
<dbReference type="SMR" id="B1VFY8"/>
<dbReference type="STRING" id="504474.cu0717"/>
<dbReference type="GeneID" id="60603493"/>
<dbReference type="KEGG" id="cur:cu0717"/>
<dbReference type="eggNOG" id="COG0355">
    <property type="taxonomic scope" value="Bacteria"/>
</dbReference>
<dbReference type="HOGENOM" id="CLU_084338_4_0_11"/>
<dbReference type="Proteomes" id="UP000001727">
    <property type="component" value="Chromosome"/>
</dbReference>
<dbReference type="GO" id="GO:0005886">
    <property type="term" value="C:plasma membrane"/>
    <property type="evidence" value="ECO:0007669"/>
    <property type="project" value="UniProtKB-SubCell"/>
</dbReference>
<dbReference type="GO" id="GO:0045259">
    <property type="term" value="C:proton-transporting ATP synthase complex"/>
    <property type="evidence" value="ECO:0007669"/>
    <property type="project" value="UniProtKB-KW"/>
</dbReference>
<dbReference type="GO" id="GO:0005524">
    <property type="term" value="F:ATP binding"/>
    <property type="evidence" value="ECO:0007669"/>
    <property type="project" value="UniProtKB-UniRule"/>
</dbReference>
<dbReference type="GO" id="GO:0046933">
    <property type="term" value="F:proton-transporting ATP synthase activity, rotational mechanism"/>
    <property type="evidence" value="ECO:0007669"/>
    <property type="project" value="UniProtKB-UniRule"/>
</dbReference>
<dbReference type="CDD" id="cd12152">
    <property type="entry name" value="F1-ATPase_delta"/>
    <property type="match status" value="1"/>
</dbReference>
<dbReference type="Gene3D" id="2.60.15.10">
    <property type="entry name" value="F0F1 ATP synthase delta/epsilon subunit, N-terminal"/>
    <property type="match status" value="1"/>
</dbReference>
<dbReference type="HAMAP" id="MF_00530">
    <property type="entry name" value="ATP_synth_epsil_bac"/>
    <property type="match status" value="1"/>
</dbReference>
<dbReference type="InterPro" id="IPR001469">
    <property type="entry name" value="ATP_synth_F1_dsu/esu"/>
</dbReference>
<dbReference type="InterPro" id="IPR020546">
    <property type="entry name" value="ATP_synth_F1_dsu/esu_N"/>
</dbReference>
<dbReference type="InterPro" id="IPR036771">
    <property type="entry name" value="ATPsynth_dsu/esu_N"/>
</dbReference>
<dbReference type="NCBIfam" id="TIGR01216">
    <property type="entry name" value="ATP_synt_epsi"/>
    <property type="match status" value="1"/>
</dbReference>
<dbReference type="NCBIfam" id="NF001852">
    <property type="entry name" value="PRK00571.2-5"/>
    <property type="match status" value="1"/>
</dbReference>
<dbReference type="NCBIfam" id="NF009977">
    <property type="entry name" value="PRK13442.1"/>
    <property type="match status" value="1"/>
</dbReference>
<dbReference type="PANTHER" id="PTHR13822">
    <property type="entry name" value="ATP SYNTHASE DELTA/EPSILON CHAIN"/>
    <property type="match status" value="1"/>
</dbReference>
<dbReference type="PANTHER" id="PTHR13822:SF10">
    <property type="entry name" value="ATP SYNTHASE EPSILON CHAIN, CHLOROPLASTIC"/>
    <property type="match status" value="1"/>
</dbReference>
<dbReference type="Pfam" id="PF02823">
    <property type="entry name" value="ATP-synt_DE_N"/>
    <property type="match status" value="1"/>
</dbReference>
<dbReference type="SUPFAM" id="SSF51344">
    <property type="entry name" value="Epsilon subunit of F1F0-ATP synthase N-terminal domain"/>
    <property type="match status" value="1"/>
</dbReference>
<protein>
    <recommendedName>
        <fullName evidence="1">ATP synthase epsilon chain</fullName>
    </recommendedName>
    <alternativeName>
        <fullName evidence="1">ATP synthase F1 sector epsilon subunit</fullName>
    </alternativeName>
    <alternativeName>
        <fullName evidence="1">F-ATPase epsilon subunit</fullName>
    </alternativeName>
</protein>
<reference key="1">
    <citation type="journal article" date="2008" name="J. Biotechnol.">
        <title>The lifestyle of Corynebacterium urealyticum derived from its complete genome sequence established by pyrosequencing.</title>
        <authorList>
            <person name="Tauch A."/>
            <person name="Trost E."/>
            <person name="Tilker A."/>
            <person name="Ludewig U."/>
            <person name="Schneiker S."/>
            <person name="Goesmann A."/>
            <person name="Arnold W."/>
            <person name="Bekel T."/>
            <person name="Brinkrolf K."/>
            <person name="Brune I."/>
            <person name="Goetker S."/>
            <person name="Kalinowski J."/>
            <person name="Kamp P.-B."/>
            <person name="Lobo F.P."/>
            <person name="Viehoever P."/>
            <person name="Weisshaar B."/>
            <person name="Soriano F."/>
            <person name="Droege M."/>
            <person name="Puehler A."/>
        </authorList>
    </citation>
    <scope>NUCLEOTIDE SEQUENCE [LARGE SCALE GENOMIC DNA]</scope>
    <source>
        <strain>ATCC 43042 / DSM 7109</strain>
    </source>
</reference>
<sequence length="124" mass="13115">MAEIAAELVAVEKALWSGTATAVIAETTEGEIGVLPGHEPLLGQLVENGVVIIRTTEGEKLVAAVQGGFLSVSSKKITVLADSAVWADEVDQADAEARVREASSEEEKSRAESELRAVKRSKEK</sequence>
<accession>B1VFY8</accession>
<gene>
    <name evidence="1" type="primary">atpC</name>
    <name type="ordered locus">cu0717</name>
</gene>
<organism>
    <name type="scientific">Corynebacterium urealyticum (strain ATCC 43042 / DSM 7109)</name>
    <dbReference type="NCBI Taxonomy" id="504474"/>
    <lineage>
        <taxon>Bacteria</taxon>
        <taxon>Bacillati</taxon>
        <taxon>Actinomycetota</taxon>
        <taxon>Actinomycetes</taxon>
        <taxon>Mycobacteriales</taxon>
        <taxon>Corynebacteriaceae</taxon>
        <taxon>Corynebacterium</taxon>
    </lineage>
</organism>